<feature type="chain" id="PRO_1000067568" description="Large ribosomal subunit protein uL3">
    <location>
        <begin position="1"/>
        <end position="215"/>
    </location>
</feature>
<feature type="modified residue" description="N5-methylglutamine" evidence="1">
    <location>
        <position position="151"/>
    </location>
</feature>
<keyword id="KW-0488">Methylation</keyword>
<keyword id="KW-0687">Ribonucleoprotein</keyword>
<keyword id="KW-0689">Ribosomal protein</keyword>
<keyword id="KW-0694">RNA-binding</keyword>
<keyword id="KW-0699">rRNA-binding</keyword>
<organism>
    <name type="scientific">Rickettsia massiliae (strain Mtu5)</name>
    <dbReference type="NCBI Taxonomy" id="416276"/>
    <lineage>
        <taxon>Bacteria</taxon>
        <taxon>Pseudomonadati</taxon>
        <taxon>Pseudomonadota</taxon>
        <taxon>Alphaproteobacteria</taxon>
        <taxon>Rickettsiales</taxon>
        <taxon>Rickettsiaceae</taxon>
        <taxon>Rickettsieae</taxon>
        <taxon>Rickettsia</taxon>
        <taxon>spotted fever group</taxon>
    </lineage>
</organism>
<reference key="1">
    <citation type="journal article" date="2007" name="Genome Res.">
        <title>Lateral gene transfer between obligate intracellular bacteria: evidence from the Rickettsia massiliae genome.</title>
        <authorList>
            <person name="Blanc G."/>
            <person name="Ogata H."/>
            <person name="Robert C."/>
            <person name="Audic S."/>
            <person name="Claverie J.-M."/>
            <person name="Raoult D."/>
        </authorList>
    </citation>
    <scope>NUCLEOTIDE SEQUENCE [LARGE SCALE GENOMIC DNA]</scope>
    <source>
        <strain>Mtu5</strain>
    </source>
</reference>
<comment type="function">
    <text evidence="1">One of the primary rRNA binding proteins, it binds directly near the 3'-end of the 23S rRNA, where it nucleates assembly of the 50S subunit.</text>
</comment>
<comment type="subunit">
    <text evidence="1">Part of the 50S ribosomal subunit. Forms a cluster with proteins L14 and L19.</text>
</comment>
<comment type="PTM">
    <text evidence="1">Methylated by PrmB.</text>
</comment>
<comment type="similarity">
    <text evidence="1">Belongs to the universal ribosomal protein uL3 family.</text>
</comment>
<accession>A8F2E7</accession>
<name>RL3_RICM5</name>
<proteinExistence type="inferred from homology"/>
<dbReference type="EMBL" id="CP000683">
    <property type="protein sequence ID" value="ABV85083.1"/>
    <property type="molecule type" value="Genomic_DNA"/>
</dbReference>
<dbReference type="RefSeq" id="WP_012153049.1">
    <property type="nucleotide sequence ID" value="NC_009900.1"/>
</dbReference>
<dbReference type="SMR" id="A8F2E7"/>
<dbReference type="KEGG" id="rms:RMA_1040"/>
<dbReference type="HOGENOM" id="CLU_044142_2_0_5"/>
<dbReference type="Proteomes" id="UP000001311">
    <property type="component" value="Chromosome"/>
</dbReference>
<dbReference type="GO" id="GO:1990904">
    <property type="term" value="C:ribonucleoprotein complex"/>
    <property type="evidence" value="ECO:0007669"/>
    <property type="project" value="UniProtKB-KW"/>
</dbReference>
<dbReference type="GO" id="GO:0005840">
    <property type="term" value="C:ribosome"/>
    <property type="evidence" value="ECO:0007669"/>
    <property type="project" value="UniProtKB-KW"/>
</dbReference>
<dbReference type="GO" id="GO:0019843">
    <property type="term" value="F:rRNA binding"/>
    <property type="evidence" value="ECO:0007669"/>
    <property type="project" value="UniProtKB-UniRule"/>
</dbReference>
<dbReference type="GO" id="GO:0003735">
    <property type="term" value="F:structural constituent of ribosome"/>
    <property type="evidence" value="ECO:0007669"/>
    <property type="project" value="InterPro"/>
</dbReference>
<dbReference type="GO" id="GO:0006412">
    <property type="term" value="P:translation"/>
    <property type="evidence" value="ECO:0007669"/>
    <property type="project" value="UniProtKB-UniRule"/>
</dbReference>
<dbReference type="FunFam" id="2.40.30.10:FF:000004">
    <property type="entry name" value="50S ribosomal protein L3"/>
    <property type="match status" value="1"/>
</dbReference>
<dbReference type="Gene3D" id="3.30.160.810">
    <property type="match status" value="1"/>
</dbReference>
<dbReference type="Gene3D" id="2.40.30.10">
    <property type="entry name" value="Translation factors"/>
    <property type="match status" value="1"/>
</dbReference>
<dbReference type="HAMAP" id="MF_01325_B">
    <property type="entry name" value="Ribosomal_uL3_B"/>
    <property type="match status" value="1"/>
</dbReference>
<dbReference type="InterPro" id="IPR000597">
    <property type="entry name" value="Ribosomal_uL3"/>
</dbReference>
<dbReference type="InterPro" id="IPR019927">
    <property type="entry name" value="Ribosomal_uL3_bac/org-type"/>
</dbReference>
<dbReference type="InterPro" id="IPR019926">
    <property type="entry name" value="Ribosomal_uL3_CS"/>
</dbReference>
<dbReference type="InterPro" id="IPR009000">
    <property type="entry name" value="Transl_B-barrel_sf"/>
</dbReference>
<dbReference type="NCBIfam" id="TIGR03625">
    <property type="entry name" value="L3_bact"/>
    <property type="match status" value="1"/>
</dbReference>
<dbReference type="PANTHER" id="PTHR11229">
    <property type="entry name" value="50S RIBOSOMAL PROTEIN L3"/>
    <property type="match status" value="1"/>
</dbReference>
<dbReference type="PANTHER" id="PTHR11229:SF16">
    <property type="entry name" value="LARGE RIBOSOMAL SUBUNIT PROTEIN UL3C"/>
    <property type="match status" value="1"/>
</dbReference>
<dbReference type="Pfam" id="PF00297">
    <property type="entry name" value="Ribosomal_L3"/>
    <property type="match status" value="1"/>
</dbReference>
<dbReference type="SUPFAM" id="SSF50447">
    <property type="entry name" value="Translation proteins"/>
    <property type="match status" value="1"/>
</dbReference>
<dbReference type="PROSITE" id="PS00474">
    <property type="entry name" value="RIBOSOMAL_L3"/>
    <property type="match status" value="1"/>
</dbReference>
<sequence>MRTGIIAQKVGMTSVFNDKGERISLTLVKVDDCQVVGHKTLEKHGYNALVIGVKDKKISRVTKPMKQVFANAKISPKTKLKEFRISEEHFIDIATSLEVDHFTAGQFVDITATTIGKGFAGSMKRHNFRGLEASHGVSISHRSHGSTGQRQDPGKVFRGKKMAGHMGCNQVTIQNLKIFAVDKERKLIMIQGSIPGHKNSYLSVKDAIKKISIIV</sequence>
<gene>
    <name evidence="1" type="primary">rplC</name>
    <name type="ordered locus">RMA_1040</name>
</gene>
<evidence type="ECO:0000255" key="1">
    <source>
        <dbReference type="HAMAP-Rule" id="MF_01325"/>
    </source>
</evidence>
<evidence type="ECO:0000305" key="2"/>
<protein>
    <recommendedName>
        <fullName evidence="1">Large ribosomal subunit protein uL3</fullName>
    </recommendedName>
    <alternativeName>
        <fullName evidence="2">50S ribosomal protein L3</fullName>
    </alternativeName>
</protein>